<dbReference type="SMR" id="C0HLA4"/>
<dbReference type="GO" id="GO:0005576">
    <property type="term" value="C:extracellular region"/>
    <property type="evidence" value="ECO:0007669"/>
    <property type="project" value="UniProtKB-SubCell"/>
</dbReference>
<dbReference type="GO" id="GO:0090729">
    <property type="term" value="F:toxin activity"/>
    <property type="evidence" value="ECO:0007669"/>
    <property type="project" value="UniProtKB-KW"/>
</dbReference>
<dbReference type="Gene3D" id="3.10.100.10">
    <property type="entry name" value="Mannose-Binding Protein A, subunit A"/>
    <property type="match status" value="1"/>
</dbReference>
<dbReference type="InterPro" id="IPR016186">
    <property type="entry name" value="C-type_lectin-like/link_sf"/>
</dbReference>
<dbReference type="InterPro" id="IPR016187">
    <property type="entry name" value="CTDL_fold"/>
</dbReference>
<dbReference type="SUPFAM" id="SSF56436">
    <property type="entry name" value="C-type lectin-like"/>
    <property type="match status" value="1"/>
</dbReference>
<name>SLLB_LACMR</name>
<organism evidence="4">
    <name type="scientific">Lachesis muta rhombeata</name>
    <name type="common">Bushmaster</name>
    <dbReference type="NCBI Taxonomy" id="60219"/>
    <lineage>
        <taxon>Eukaryota</taxon>
        <taxon>Metazoa</taxon>
        <taxon>Chordata</taxon>
        <taxon>Craniata</taxon>
        <taxon>Vertebrata</taxon>
        <taxon>Euteleostomi</taxon>
        <taxon>Lepidosauria</taxon>
        <taxon>Squamata</taxon>
        <taxon>Bifurcata</taxon>
        <taxon>Unidentata</taxon>
        <taxon>Episquamata</taxon>
        <taxon>Toxicofera</taxon>
        <taxon>Serpentes</taxon>
        <taxon>Colubroidea</taxon>
        <taxon>Viperidae</taxon>
        <taxon>Crotalinae</taxon>
        <taxon>Lachesis</taxon>
    </lineage>
</organism>
<proteinExistence type="evidence at protein level"/>
<evidence type="ECO:0000250" key="1">
    <source>
        <dbReference type="UniProtKB" id="Q9I840"/>
    </source>
</evidence>
<evidence type="ECO:0000255" key="2">
    <source>
        <dbReference type="PROSITE-ProRule" id="PRU00040"/>
    </source>
</evidence>
<evidence type="ECO:0000269" key="3">
    <source>
    </source>
</evidence>
<evidence type="ECO:0000303" key="4">
    <source>
    </source>
</evidence>
<evidence type="ECO:0000305" key="5"/>
<evidence type="ECO:0000305" key="6">
    <source>
    </source>
</evidence>
<reference evidence="5" key="1">
    <citation type="journal article" date="2019" name="J. Venom. Anim. Toxins Incl. Trop. Dis.">
        <title>Subproteome of Lachesis muta rhombeata venom and preliminary studies on LmrSP-4, a novel snake venom serine proteinase.</title>
        <authorList>
            <person name="Wiezel G.A."/>
            <person name="Bordon K.C."/>
            <person name="Silva R.R."/>
            <person name="Gomes M.S."/>
            <person name="Cabral H."/>
            <person name="Rodrigues V.M."/>
            <person name="Ueberheide B."/>
            <person name="Arantes E.C."/>
        </authorList>
    </citation>
    <scope>PROTEIN SEQUENCE</scope>
    <scope>SUBCELLULAR LOCATION</scope>
    <source>
        <tissue evidence="4">Venom</tissue>
    </source>
</reference>
<comment type="function">
    <text evidence="1">Interferes with one step of hemostasis (modulation of platelet aggregation, or coagulation cascade, for example).</text>
</comment>
<comment type="subunit">
    <text evidence="1">Dimer (non-covalently linked) of heterodimers of subunits alpha and beta (disulfide-linked).</text>
</comment>
<comment type="subcellular location">
    <subcellularLocation>
        <location evidence="3">Secreted</location>
    </subcellularLocation>
</comment>
<comment type="tissue specificity">
    <text evidence="6">Expressed by the venom gland.</text>
</comment>
<comment type="similarity">
    <text evidence="5">Belongs to the snaclec family.</text>
</comment>
<keyword id="KW-0903">Direct protein sequencing</keyword>
<keyword id="KW-1015">Disulfide bond</keyword>
<keyword id="KW-1199">Hemostasis impairing toxin</keyword>
<keyword id="KW-0964">Secreted</keyword>
<keyword id="KW-0800">Toxin</keyword>
<feature type="chain" id="PRO_0000447687" description="Snaclec LmrLEC-1">
    <location>
        <begin position="1"/>
        <end position="40" status="greater than"/>
    </location>
</feature>
<feature type="disulfide bond" evidence="2">
    <location>
        <begin position="2"/>
        <end position="13"/>
    </location>
</feature>
<feature type="non-terminal residue">
    <location>
        <position position="40"/>
    </location>
</feature>
<sequence>DCPSGWSSYEGHCYRVFNEPKNWADAERFCKLQPKHSHLV</sequence>
<accession>C0HLA4</accession>
<protein>
    <recommendedName>
        <fullName evidence="4">Snaclec LmrLEC-1</fullName>
    </recommendedName>
</protein>